<keyword id="KW-0255">Endonuclease</keyword>
<keyword id="KW-0378">Hydrolase</keyword>
<keyword id="KW-0540">Nuclease</keyword>
<keyword id="KW-1185">Reference proteome</keyword>
<keyword id="KW-0687">Ribonucleoprotein</keyword>
<keyword id="KW-0689">Ribosomal protein</keyword>
<evidence type="ECO:0000250" key="1"/>
<evidence type="ECO:0000255" key="2">
    <source>
        <dbReference type="HAMAP-Rule" id="MF_00385"/>
    </source>
</evidence>
<evidence type="ECO:0000305" key="3"/>
<proteinExistence type="inferred from homology"/>
<reference key="1">
    <citation type="journal article" date="2002" name="Nucleic Acids Res.">
        <title>Genome sequence of Shigella flexneri 2a: insights into pathogenicity through comparison with genomes of Escherichia coli K12 and O157.</title>
        <authorList>
            <person name="Jin Q."/>
            <person name="Yuan Z."/>
            <person name="Xu J."/>
            <person name="Wang Y."/>
            <person name="Shen Y."/>
            <person name="Lu W."/>
            <person name="Wang J."/>
            <person name="Liu H."/>
            <person name="Yang J."/>
            <person name="Yang F."/>
            <person name="Zhang X."/>
            <person name="Zhang J."/>
            <person name="Yang G."/>
            <person name="Wu H."/>
            <person name="Qu D."/>
            <person name="Dong J."/>
            <person name="Sun L."/>
            <person name="Xue Y."/>
            <person name="Zhao A."/>
            <person name="Gao Y."/>
            <person name="Zhu J."/>
            <person name="Kan B."/>
            <person name="Ding K."/>
            <person name="Chen S."/>
            <person name="Cheng H."/>
            <person name="Yao Z."/>
            <person name="He B."/>
            <person name="Chen R."/>
            <person name="Ma D."/>
            <person name="Qiang B."/>
            <person name="Wen Y."/>
            <person name="Hou Y."/>
            <person name="Yu J."/>
        </authorList>
    </citation>
    <scope>NUCLEOTIDE SEQUENCE [LARGE SCALE GENOMIC DNA]</scope>
    <source>
        <strain>301 / Serotype 2a</strain>
    </source>
</reference>
<reference key="2">
    <citation type="journal article" date="2003" name="Infect. Immun.">
        <title>Complete genome sequence and comparative genomics of Shigella flexneri serotype 2a strain 2457T.</title>
        <authorList>
            <person name="Wei J."/>
            <person name="Goldberg M.B."/>
            <person name="Burland V."/>
            <person name="Venkatesan M.M."/>
            <person name="Deng W."/>
            <person name="Fournier G."/>
            <person name="Mayhew G.F."/>
            <person name="Plunkett G. III"/>
            <person name="Rose D.J."/>
            <person name="Darling A."/>
            <person name="Mau B."/>
            <person name="Perna N.T."/>
            <person name="Payne S.M."/>
            <person name="Runyen-Janecky L.J."/>
            <person name="Zhou S."/>
            <person name="Schwartz D.C."/>
            <person name="Blattner F.R."/>
        </authorList>
    </citation>
    <scope>NUCLEOTIDE SEQUENCE [LARGE SCALE GENOMIC DNA]</scope>
    <source>
        <strain>ATCC 700930 / 2457T / Serotype 2a</strain>
    </source>
</reference>
<accession>P0A7T6</accession>
<accession>P02372</accession>
<accession>P77006</accession>
<comment type="function">
    <text evidence="1">In addition to being a ribosomal protein, S16 also has a cation-dependent endonuclease activity.</text>
</comment>
<comment type="similarity">
    <text evidence="2">Belongs to the bacterial ribosomal protein bS16 family.</text>
</comment>
<name>RS16_SHIFL</name>
<sequence length="82" mass="9191">MVTIRLARHGAKKRPFYQVVVADSRNARNGRFIERVGFFNPIASEKEEGTRLDLDRIAHWVGQGATISDRVAALIKEVNKAA</sequence>
<protein>
    <recommendedName>
        <fullName evidence="2">Small ribosomal subunit protein bS16</fullName>
    </recommendedName>
    <alternativeName>
        <fullName evidence="3">30S ribosomal protein S16</fullName>
    </alternativeName>
</protein>
<organism>
    <name type="scientific">Shigella flexneri</name>
    <dbReference type="NCBI Taxonomy" id="623"/>
    <lineage>
        <taxon>Bacteria</taxon>
        <taxon>Pseudomonadati</taxon>
        <taxon>Pseudomonadota</taxon>
        <taxon>Gammaproteobacteria</taxon>
        <taxon>Enterobacterales</taxon>
        <taxon>Enterobacteriaceae</taxon>
        <taxon>Shigella</taxon>
    </lineage>
</organism>
<gene>
    <name evidence="2" type="primary">rpsP</name>
    <name type="ordered locus">SF2669</name>
    <name type="ordered locus">S2846</name>
</gene>
<dbReference type="EMBL" id="AE005674">
    <property type="protein sequence ID" value="AAN44164.1"/>
    <property type="molecule type" value="Genomic_DNA"/>
</dbReference>
<dbReference type="EMBL" id="AE014073">
    <property type="protein sequence ID" value="AAP17989.1"/>
    <property type="molecule type" value="Genomic_DNA"/>
</dbReference>
<dbReference type="RefSeq" id="NP_708457.1">
    <property type="nucleotide sequence ID" value="NC_004337.2"/>
</dbReference>
<dbReference type="RefSeq" id="WP_000256450.1">
    <property type="nucleotide sequence ID" value="NZ_WPGW01000074.1"/>
</dbReference>
<dbReference type="SMR" id="P0A7T6"/>
<dbReference type="STRING" id="198214.SF2669"/>
<dbReference type="PaxDb" id="198214-SF2669"/>
<dbReference type="GeneID" id="1025675"/>
<dbReference type="GeneID" id="93774459"/>
<dbReference type="KEGG" id="sfl:SF2669"/>
<dbReference type="KEGG" id="sfx:S2846"/>
<dbReference type="PATRIC" id="fig|198214.7.peg.3178"/>
<dbReference type="HOGENOM" id="CLU_100590_5_1_6"/>
<dbReference type="Proteomes" id="UP000001006">
    <property type="component" value="Chromosome"/>
</dbReference>
<dbReference type="Proteomes" id="UP000002673">
    <property type="component" value="Chromosome"/>
</dbReference>
<dbReference type="GO" id="GO:0005737">
    <property type="term" value="C:cytoplasm"/>
    <property type="evidence" value="ECO:0007669"/>
    <property type="project" value="UniProtKB-ARBA"/>
</dbReference>
<dbReference type="GO" id="GO:0015935">
    <property type="term" value="C:small ribosomal subunit"/>
    <property type="evidence" value="ECO:0007669"/>
    <property type="project" value="TreeGrafter"/>
</dbReference>
<dbReference type="GO" id="GO:0004519">
    <property type="term" value="F:endonuclease activity"/>
    <property type="evidence" value="ECO:0007669"/>
    <property type="project" value="UniProtKB-KW"/>
</dbReference>
<dbReference type="GO" id="GO:0003735">
    <property type="term" value="F:structural constituent of ribosome"/>
    <property type="evidence" value="ECO:0007669"/>
    <property type="project" value="InterPro"/>
</dbReference>
<dbReference type="GO" id="GO:0006412">
    <property type="term" value="P:translation"/>
    <property type="evidence" value="ECO:0007669"/>
    <property type="project" value="UniProtKB-UniRule"/>
</dbReference>
<dbReference type="FunFam" id="3.30.1320.10:FF:000001">
    <property type="entry name" value="30S ribosomal protein S16"/>
    <property type="match status" value="1"/>
</dbReference>
<dbReference type="Gene3D" id="3.30.1320.10">
    <property type="match status" value="1"/>
</dbReference>
<dbReference type="HAMAP" id="MF_00385">
    <property type="entry name" value="Ribosomal_bS16"/>
    <property type="match status" value="1"/>
</dbReference>
<dbReference type="InterPro" id="IPR000307">
    <property type="entry name" value="Ribosomal_bS16"/>
</dbReference>
<dbReference type="InterPro" id="IPR020592">
    <property type="entry name" value="Ribosomal_bS16_CS"/>
</dbReference>
<dbReference type="InterPro" id="IPR023803">
    <property type="entry name" value="Ribosomal_bS16_dom_sf"/>
</dbReference>
<dbReference type="NCBIfam" id="TIGR00002">
    <property type="entry name" value="S16"/>
    <property type="match status" value="1"/>
</dbReference>
<dbReference type="PANTHER" id="PTHR12919">
    <property type="entry name" value="30S RIBOSOMAL PROTEIN S16"/>
    <property type="match status" value="1"/>
</dbReference>
<dbReference type="PANTHER" id="PTHR12919:SF20">
    <property type="entry name" value="SMALL RIBOSOMAL SUBUNIT PROTEIN BS16M"/>
    <property type="match status" value="1"/>
</dbReference>
<dbReference type="Pfam" id="PF00886">
    <property type="entry name" value="Ribosomal_S16"/>
    <property type="match status" value="1"/>
</dbReference>
<dbReference type="SUPFAM" id="SSF54565">
    <property type="entry name" value="Ribosomal protein S16"/>
    <property type="match status" value="1"/>
</dbReference>
<dbReference type="PROSITE" id="PS00732">
    <property type="entry name" value="RIBOSOMAL_S16"/>
    <property type="match status" value="1"/>
</dbReference>
<feature type="chain" id="PRO_0000167239" description="Small ribosomal subunit protein bS16">
    <location>
        <begin position="1"/>
        <end position="82"/>
    </location>
</feature>